<reference key="1">
    <citation type="journal article" date="2009" name="Environ. Microbiol.">
        <title>The genome of Polaromonas naphthalenivorans strain CJ2, isolated from coal tar-contaminated sediment, reveals physiological and metabolic versatility and evolution through extensive horizontal gene transfer.</title>
        <authorList>
            <person name="Yagi J.M."/>
            <person name="Sims D."/>
            <person name="Brettin T."/>
            <person name="Bruce D."/>
            <person name="Madsen E.L."/>
        </authorList>
    </citation>
    <scope>NUCLEOTIDE SEQUENCE [LARGE SCALE GENOMIC DNA]</scope>
    <source>
        <strain>CJ2</strain>
    </source>
</reference>
<keyword id="KW-0488">Methylation</keyword>
<keyword id="KW-1185">Reference proteome</keyword>
<keyword id="KW-0687">Ribonucleoprotein</keyword>
<keyword id="KW-0689">Ribosomal protein</keyword>
<keyword id="KW-0694">RNA-binding</keyword>
<keyword id="KW-0699">rRNA-binding</keyword>
<keyword id="KW-0820">tRNA-binding</keyword>
<evidence type="ECO:0000250" key="1"/>
<evidence type="ECO:0000255" key="2">
    <source>
        <dbReference type="HAMAP-Rule" id="MF_00403"/>
    </source>
</evidence>
<evidence type="ECO:0000256" key="3">
    <source>
        <dbReference type="SAM" id="MobiDB-lite"/>
    </source>
</evidence>
<evidence type="ECO:0000305" key="4"/>
<dbReference type="EMBL" id="CP000529">
    <property type="protein sequence ID" value="ABM35523.1"/>
    <property type="molecule type" value="Genomic_DNA"/>
</dbReference>
<dbReference type="RefSeq" id="WP_011799633.1">
    <property type="nucleotide sequence ID" value="NC_008781.1"/>
</dbReference>
<dbReference type="SMR" id="A1VIP5"/>
<dbReference type="STRING" id="365044.Pnap_0198"/>
<dbReference type="KEGG" id="pna:Pnap_0198"/>
<dbReference type="eggNOG" id="COG0048">
    <property type="taxonomic scope" value="Bacteria"/>
</dbReference>
<dbReference type="HOGENOM" id="CLU_104295_1_2_4"/>
<dbReference type="OrthoDB" id="9802366at2"/>
<dbReference type="Proteomes" id="UP000000644">
    <property type="component" value="Chromosome"/>
</dbReference>
<dbReference type="GO" id="GO:0015935">
    <property type="term" value="C:small ribosomal subunit"/>
    <property type="evidence" value="ECO:0007669"/>
    <property type="project" value="InterPro"/>
</dbReference>
<dbReference type="GO" id="GO:0019843">
    <property type="term" value="F:rRNA binding"/>
    <property type="evidence" value="ECO:0007669"/>
    <property type="project" value="UniProtKB-UniRule"/>
</dbReference>
<dbReference type="GO" id="GO:0003735">
    <property type="term" value="F:structural constituent of ribosome"/>
    <property type="evidence" value="ECO:0007669"/>
    <property type="project" value="InterPro"/>
</dbReference>
<dbReference type="GO" id="GO:0000049">
    <property type="term" value="F:tRNA binding"/>
    <property type="evidence" value="ECO:0007669"/>
    <property type="project" value="UniProtKB-UniRule"/>
</dbReference>
<dbReference type="GO" id="GO:0006412">
    <property type="term" value="P:translation"/>
    <property type="evidence" value="ECO:0007669"/>
    <property type="project" value="UniProtKB-UniRule"/>
</dbReference>
<dbReference type="CDD" id="cd03368">
    <property type="entry name" value="Ribosomal_S12"/>
    <property type="match status" value="1"/>
</dbReference>
<dbReference type="FunFam" id="2.40.50.140:FF:000001">
    <property type="entry name" value="30S ribosomal protein S12"/>
    <property type="match status" value="1"/>
</dbReference>
<dbReference type="Gene3D" id="2.40.50.140">
    <property type="entry name" value="Nucleic acid-binding proteins"/>
    <property type="match status" value="1"/>
</dbReference>
<dbReference type="HAMAP" id="MF_00403_B">
    <property type="entry name" value="Ribosomal_uS12_B"/>
    <property type="match status" value="1"/>
</dbReference>
<dbReference type="InterPro" id="IPR012340">
    <property type="entry name" value="NA-bd_OB-fold"/>
</dbReference>
<dbReference type="InterPro" id="IPR006032">
    <property type="entry name" value="Ribosomal_uS12"/>
</dbReference>
<dbReference type="InterPro" id="IPR005679">
    <property type="entry name" value="Ribosomal_uS12_bac"/>
</dbReference>
<dbReference type="NCBIfam" id="TIGR00981">
    <property type="entry name" value="rpsL_bact"/>
    <property type="match status" value="1"/>
</dbReference>
<dbReference type="PANTHER" id="PTHR11652">
    <property type="entry name" value="30S RIBOSOMAL PROTEIN S12 FAMILY MEMBER"/>
    <property type="match status" value="1"/>
</dbReference>
<dbReference type="Pfam" id="PF00164">
    <property type="entry name" value="Ribosom_S12_S23"/>
    <property type="match status" value="1"/>
</dbReference>
<dbReference type="PIRSF" id="PIRSF002133">
    <property type="entry name" value="Ribosomal_S12/S23"/>
    <property type="match status" value="1"/>
</dbReference>
<dbReference type="PRINTS" id="PR01034">
    <property type="entry name" value="RIBOSOMALS12"/>
</dbReference>
<dbReference type="SUPFAM" id="SSF50249">
    <property type="entry name" value="Nucleic acid-binding proteins"/>
    <property type="match status" value="1"/>
</dbReference>
<dbReference type="PROSITE" id="PS00055">
    <property type="entry name" value="RIBOSOMAL_S12"/>
    <property type="match status" value="1"/>
</dbReference>
<feature type="chain" id="PRO_0000296012" description="Small ribosomal subunit protein uS12">
    <location>
        <begin position="1"/>
        <end position="125"/>
    </location>
</feature>
<feature type="region of interest" description="Disordered" evidence="3">
    <location>
        <begin position="9"/>
        <end position="31"/>
    </location>
</feature>
<feature type="region of interest" description="Disordered" evidence="3">
    <location>
        <begin position="105"/>
        <end position="125"/>
    </location>
</feature>
<feature type="compositionally biased region" description="Basic residues" evidence="3">
    <location>
        <begin position="113"/>
        <end position="125"/>
    </location>
</feature>
<feature type="modified residue" description="3-methylthioaspartic acid" evidence="1">
    <location>
        <position position="89"/>
    </location>
</feature>
<name>RS12_POLNA</name>
<gene>
    <name evidence="2" type="primary">rpsL</name>
    <name type="ordered locus">Pnap_0198</name>
</gene>
<accession>A1VIP5</accession>
<proteinExistence type="inferred from homology"/>
<comment type="function">
    <text evidence="2">With S4 and S5 plays an important role in translational accuracy.</text>
</comment>
<comment type="function">
    <text evidence="2">Interacts with and stabilizes bases of the 16S rRNA that are involved in tRNA selection in the A site and with the mRNA backbone. Located at the interface of the 30S and 50S subunits, it traverses the body of the 30S subunit contacting proteins on the other side and probably holding the rRNA structure together. The combined cluster of proteins S8, S12 and S17 appears to hold together the shoulder and platform of the 30S subunit.</text>
</comment>
<comment type="subunit">
    <text evidence="2">Part of the 30S ribosomal subunit. Contacts proteins S8 and S17. May interact with IF1 in the 30S initiation complex.</text>
</comment>
<comment type="similarity">
    <text evidence="2">Belongs to the universal ribosomal protein uS12 family.</text>
</comment>
<sequence length="125" mass="14018">MPTINQLVRQGREVEKIKSKSPAMENSPQRRGVCTRVYTTTPKKPNSALRKVAKVRLTNGFEIISYIGGEGHNLQEHSVVLVRGGRVKDLPGVRYHIVRGSLDLQGVKDRKQSRSKYGAKRPKAK</sequence>
<organism>
    <name type="scientific">Polaromonas naphthalenivorans (strain CJ2)</name>
    <dbReference type="NCBI Taxonomy" id="365044"/>
    <lineage>
        <taxon>Bacteria</taxon>
        <taxon>Pseudomonadati</taxon>
        <taxon>Pseudomonadota</taxon>
        <taxon>Betaproteobacteria</taxon>
        <taxon>Burkholderiales</taxon>
        <taxon>Comamonadaceae</taxon>
        <taxon>Polaromonas</taxon>
    </lineage>
</organism>
<protein>
    <recommendedName>
        <fullName evidence="2">Small ribosomal subunit protein uS12</fullName>
    </recommendedName>
    <alternativeName>
        <fullName evidence="4">30S ribosomal protein S12</fullName>
    </alternativeName>
</protein>